<name>DDL_HYDCU</name>
<evidence type="ECO:0000250" key="1"/>
<evidence type="ECO:0000255" key="2">
    <source>
        <dbReference type="HAMAP-Rule" id="MF_00047"/>
    </source>
</evidence>
<sequence>MTQSSNQTKDRVQRLGKVAVLMGGVAAERDVSLRSGAEVLKALKSEGVDAVGCDVTSVAQLVEIAQKYDRAFIALHGRWGEDGGVQAVLDSLALPYTGSGMTASALAMDKLRTKWLWKGVGLPTPAFIVVSPSRPLDVETFDLTFPVIVKPSHEGSSIGMRKVDTLDALQEAVDFAQQYDSEILIEQWITGREFTCAVLDGEALPMIQLKTDHDFYDFDAKYQSNTTEYLCPCGLEIAEEKRIQALVLQAFDAVGARHWGRVDLMLDDQNQPWLIEINTVPGMTDHSLVPMAAKAVDLSFSKLVLKLISLTLP</sequence>
<organism>
    <name type="scientific">Hydrogenovibrio crunogenus (strain DSM 25203 / XCL-2)</name>
    <name type="common">Thiomicrospira crunogena</name>
    <dbReference type="NCBI Taxonomy" id="317025"/>
    <lineage>
        <taxon>Bacteria</taxon>
        <taxon>Pseudomonadati</taxon>
        <taxon>Pseudomonadota</taxon>
        <taxon>Gammaproteobacteria</taxon>
        <taxon>Thiotrichales</taxon>
        <taxon>Piscirickettsiaceae</taxon>
        <taxon>Hydrogenovibrio</taxon>
    </lineage>
</organism>
<dbReference type="EC" id="6.3.2.4" evidence="2"/>
<dbReference type="EMBL" id="CP000109">
    <property type="protein sequence ID" value="ABB41181.1"/>
    <property type="molecule type" value="Genomic_DNA"/>
</dbReference>
<dbReference type="SMR" id="Q31I42"/>
<dbReference type="STRING" id="317025.Tcr_0585"/>
<dbReference type="KEGG" id="tcx:Tcr_0585"/>
<dbReference type="eggNOG" id="COG1181">
    <property type="taxonomic scope" value="Bacteria"/>
</dbReference>
<dbReference type="HOGENOM" id="CLU_039268_1_2_6"/>
<dbReference type="OrthoDB" id="9813261at2"/>
<dbReference type="UniPathway" id="UPA00219"/>
<dbReference type="GO" id="GO:0005829">
    <property type="term" value="C:cytosol"/>
    <property type="evidence" value="ECO:0007669"/>
    <property type="project" value="TreeGrafter"/>
</dbReference>
<dbReference type="GO" id="GO:0005524">
    <property type="term" value="F:ATP binding"/>
    <property type="evidence" value="ECO:0007669"/>
    <property type="project" value="UniProtKB-KW"/>
</dbReference>
<dbReference type="GO" id="GO:0008716">
    <property type="term" value="F:D-alanine-D-alanine ligase activity"/>
    <property type="evidence" value="ECO:0007669"/>
    <property type="project" value="UniProtKB-UniRule"/>
</dbReference>
<dbReference type="GO" id="GO:0046872">
    <property type="term" value="F:metal ion binding"/>
    <property type="evidence" value="ECO:0007669"/>
    <property type="project" value="UniProtKB-KW"/>
</dbReference>
<dbReference type="GO" id="GO:0071555">
    <property type="term" value="P:cell wall organization"/>
    <property type="evidence" value="ECO:0007669"/>
    <property type="project" value="UniProtKB-KW"/>
</dbReference>
<dbReference type="GO" id="GO:0009252">
    <property type="term" value="P:peptidoglycan biosynthetic process"/>
    <property type="evidence" value="ECO:0007669"/>
    <property type="project" value="UniProtKB-UniRule"/>
</dbReference>
<dbReference type="GO" id="GO:0008360">
    <property type="term" value="P:regulation of cell shape"/>
    <property type="evidence" value="ECO:0007669"/>
    <property type="project" value="UniProtKB-KW"/>
</dbReference>
<dbReference type="FunFam" id="3.30.470.20:FF:000008">
    <property type="entry name" value="D-alanine--D-alanine ligase"/>
    <property type="match status" value="1"/>
</dbReference>
<dbReference type="Gene3D" id="3.40.50.20">
    <property type="match status" value="1"/>
</dbReference>
<dbReference type="Gene3D" id="3.30.1490.20">
    <property type="entry name" value="ATP-grasp fold, A domain"/>
    <property type="match status" value="1"/>
</dbReference>
<dbReference type="Gene3D" id="3.30.470.20">
    <property type="entry name" value="ATP-grasp fold, B domain"/>
    <property type="match status" value="1"/>
</dbReference>
<dbReference type="HAMAP" id="MF_00047">
    <property type="entry name" value="Dala_Dala_lig"/>
    <property type="match status" value="1"/>
</dbReference>
<dbReference type="InterPro" id="IPR011761">
    <property type="entry name" value="ATP-grasp"/>
</dbReference>
<dbReference type="InterPro" id="IPR013815">
    <property type="entry name" value="ATP_grasp_subdomain_1"/>
</dbReference>
<dbReference type="InterPro" id="IPR000291">
    <property type="entry name" value="D-Ala_lig_Van_CS"/>
</dbReference>
<dbReference type="InterPro" id="IPR005905">
    <property type="entry name" value="D_ala_D_ala"/>
</dbReference>
<dbReference type="InterPro" id="IPR011095">
    <property type="entry name" value="Dala_Dala_lig_C"/>
</dbReference>
<dbReference type="InterPro" id="IPR011127">
    <property type="entry name" value="Dala_Dala_lig_N"/>
</dbReference>
<dbReference type="InterPro" id="IPR016185">
    <property type="entry name" value="PreATP-grasp_dom_sf"/>
</dbReference>
<dbReference type="NCBIfam" id="TIGR01205">
    <property type="entry name" value="D_ala_D_alaTIGR"/>
    <property type="match status" value="1"/>
</dbReference>
<dbReference type="NCBIfam" id="NF002378">
    <property type="entry name" value="PRK01372.1"/>
    <property type="match status" value="1"/>
</dbReference>
<dbReference type="PANTHER" id="PTHR23132">
    <property type="entry name" value="D-ALANINE--D-ALANINE LIGASE"/>
    <property type="match status" value="1"/>
</dbReference>
<dbReference type="PANTHER" id="PTHR23132:SF23">
    <property type="entry name" value="D-ALANINE--D-ALANINE LIGASE B"/>
    <property type="match status" value="1"/>
</dbReference>
<dbReference type="Pfam" id="PF07478">
    <property type="entry name" value="Dala_Dala_lig_C"/>
    <property type="match status" value="1"/>
</dbReference>
<dbReference type="Pfam" id="PF01820">
    <property type="entry name" value="Dala_Dala_lig_N"/>
    <property type="match status" value="1"/>
</dbReference>
<dbReference type="PIRSF" id="PIRSF039102">
    <property type="entry name" value="Ddl/VanB"/>
    <property type="match status" value="1"/>
</dbReference>
<dbReference type="SUPFAM" id="SSF56059">
    <property type="entry name" value="Glutathione synthetase ATP-binding domain-like"/>
    <property type="match status" value="1"/>
</dbReference>
<dbReference type="SUPFAM" id="SSF52440">
    <property type="entry name" value="PreATP-grasp domain"/>
    <property type="match status" value="1"/>
</dbReference>
<dbReference type="PROSITE" id="PS50975">
    <property type="entry name" value="ATP_GRASP"/>
    <property type="match status" value="1"/>
</dbReference>
<dbReference type="PROSITE" id="PS00843">
    <property type="entry name" value="DALA_DALA_LIGASE_1"/>
    <property type="match status" value="1"/>
</dbReference>
<dbReference type="PROSITE" id="PS00844">
    <property type="entry name" value="DALA_DALA_LIGASE_2"/>
    <property type="match status" value="1"/>
</dbReference>
<reference key="1">
    <citation type="journal article" date="2006" name="PLoS Biol.">
        <title>The genome of deep-sea vent chemolithoautotroph Thiomicrospira crunogena XCL-2.</title>
        <authorList>
            <person name="Scott K.M."/>
            <person name="Sievert S.M."/>
            <person name="Abril F.N."/>
            <person name="Ball L.A."/>
            <person name="Barrett C.J."/>
            <person name="Blake R.A."/>
            <person name="Boller A.J."/>
            <person name="Chain P.S.G."/>
            <person name="Clark J.A."/>
            <person name="Davis C.R."/>
            <person name="Detter C."/>
            <person name="Do K.F."/>
            <person name="Dobrinski K.P."/>
            <person name="Faza B.I."/>
            <person name="Fitzpatrick K.A."/>
            <person name="Freyermuth S.K."/>
            <person name="Harmer T.L."/>
            <person name="Hauser L.J."/>
            <person name="Huegler M."/>
            <person name="Kerfeld C.A."/>
            <person name="Klotz M.G."/>
            <person name="Kong W.W."/>
            <person name="Land M."/>
            <person name="Lapidus A."/>
            <person name="Larimer F.W."/>
            <person name="Longo D.L."/>
            <person name="Lucas S."/>
            <person name="Malfatti S.A."/>
            <person name="Massey S.E."/>
            <person name="Martin D.D."/>
            <person name="McCuddin Z."/>
            <person name="Meyer F."/>
            <person name="Moore J.L."/>
            <person name="Ocampo L.H. Jr."/>
            <person name="Paul J.H."/>
            <person name="Paulsen I.T."/>
            <person name="Reep D.K."/>
            <person name="Ren Q."/>
            <person name="Ross R.L."/>
            <person name="Sato P.Y."/>
            <person name="Thomas P."/>
            <person name="Tinkham L.E."/>
            <person name="Zeruth G.T."/>
        </authorList>
    </citation>
    <scope>NUCLEOTIDE SEQUENCE [LARGE SCALE GENOMIC DNA]</scope>
    <source>
        <strain>DSM 25203 / XCL-2</strain>
    </source>
</reference>
<accession>Q31I42</accession>
<proteinExistence type="inferred from homology"/>
<gene>
    <name evidence="2" type="primary">ddl</name>
    <name type="ordered locus">Tcr_0585</name>
</gene>
<keyword id="KW-0067">ATP-binding</keyword>
<keyword id="KW-0133">Cell shape</keyword>
<keyword id="KW-0961">Cell wall biogenesis/degradation</keyword>
<keyword id="KW-0963">Cytoplasm</keyword>
<keyword id="KW-0436">Ligase</keyword>
<keyword id="KW-0460">Magnesium</keyword>
<keyword id="KW-0464">Manganese</keyword>
<keyword id="KW-0479">Metal-binding</keyword>
<keyword id="KW-0547">Nucleotide-binding</keyword>
<keyword id="KW-0573">Peptidoglycan synthesis</keyword>
<protein>
    <recommendedName>
        <fullName evidence="2">D-alanine--D-alanine ligase</fullName>
        <ecNumber evidence="2">6.3.2.4</ecNumber>
    </recommendedName>
    <alternativeName>
        <fullName evidence="2">D-Ala-D-Ala ligase</fullName>
    </alternativeName>
    <alternativeName>
        <fullName evidence="2">D-alanylalanine synthetase</fullName>
    </alternativeName>
</protein>
<comment type="function">
    <text evidence="2">Cell wall formation.</text>
</comment>
<comment type="catalytic activity">
    <reaction evidence="2">
        <text>2 D-alanine + ATP = D-alanyl-D-alanine + ADP + phosphate + H(+)</text>
        <dbReference type="Rhea" id="RHEA:11224"/>
        <dbReference type="ChEBI" id="CHEBI:15378"/>
        <dbReference type="ChEBI" id="CHEBI:30616"/>
        <dbReference type="ChEBI" id="CHEBI:43474"/>
        <dbReference type="ChEBI" id="CHEBI:57416"/>
        <dbReference type="ChEBI" id="CHEBI:57822"/>
        <dbReference type="ChEBI" id="CHEBI:456216"/>
        <dbReference type="EC" id="6.3.2.4"/>
    </reaction>
</comment>
<comment type="cofactor">
    <cofactor evidence="1">
        <name>Mg(2+)</name>
        <dbReference type="ChEBI" id="CHEBI:18420"/>
    </cofactor>
    <cofactor evidence="1">
        <name>Mn(2+)</name>
        <dbReference type="ChEBI" id="CHEBI:29035"/>
    </cofactor>
    <text evidence="1">Binds 2 magnesium or manganese ions per subunit.</text>
</comment>
<comment type="pathway">
    <text evidence="2">Cell wall biogenesis; peptidoglycan biosynthesis.</text>
</comment>
<comment type="subcellular location">
    <subcellularLocation>
        <location evidence="2">Cytoplasm</location>
    </subcellularLocation>
</comment>
<comment type="similarity">
    <text evidence="2">Belongs to the D-alanine--D-alanine ligase family.</text>
</comment>
<feature type="chain" id="PRO_0000341190" description="D-alanine--D-alanine ligase">
    <location>
        <begin position="1"/>
        <end position="313"/>
    </location>
</feature>
<feature type="domain" description="ATP-grasp" evidence="2">
    <location>
        <begin position="114"/>
        <end position="309"/>
    </location>
</feature>
<feature type="binding site" evidence="2">
    <location>
        <begin position="142"/>
        <end position="195"/>
    </location>
    <ligand>
        <name>ATP</name>
        <dbReference type="ChEBI" id="CHEBI:30616"/>
    </ligand>
</feature>
<feature type="binding site" evidence="2">
    <location>
        <position position="263"/>
    </location>
    <ligand>
        <name>Mg(2+)</name>
        <dbReference type="ChEBI" id="CHEBI:18420"/>
        <label>1</label>
    </ligand>
</feature>
<feature type="binding site" evidence="2">
    <location>
        <position position="276"/>
    </location>
    <ligand>
        <name>Mg(2+)</name>
        <dbReference type="ChEBI" id="CHEBI:18420"/>
        <label>1</label>
    </ligand>
</feature>
<feature type="binding site" evidence="2">
    <location>
        <position position="276"/>
    </location>
    <ligand>
        <name>Mg(2+)</name>
        <dbReference type="ChEBI" id="CHEBI:18420"/>
        <label>2</label>
    </ligand>
</feature>
<feature type="binding site" evidence="2">
    <location>
        <position position="278"/>
    </location>
    <ligand>
        <name>Mg(2+)</name>
        <dbReference type="ChEBI" id="CHEBI:18420"/>
        <label>2</label>
    </ligand>
</feature>